<accession>Q6YJI5</accession>
<feature type="chain" id="PRO_0000328119" description="tRNA (guanine(10)-N(2))-methyltransferase TRMT11">
    <location>
        <begin position="1"/>
        <end position="461"/>
    </location>
</feature>
<dbReference type="EC" id="2.1.1.214" evidence="1"/>
<dbReference type="EMBL" id="AY139090">
    <property type="protein sequence ID" value="AAN34361.1"/>
    <property type="molecule type" value="mRNA"/>
</dbReference>
<dbReference type="RefSeq" id="NP_989699.1">
    <property type="nucleotide sequence ID" value="NM_204368.1"/>
</dbReference>
<dbReference type="SMR" id="Q6YJI5"/>
<dbReference type="FunCoup" id="Q6YJI5">
    <property type="interactions" value="1022"/>
</dbReference>
<dbReference type="STRING" id="9031.ENSGALP00000067748"/>
<dbReference type="PaxDb" id="9031-ENSGALP00000023895"/>
<dbReference type="GeneID" id="378793"/>
<dbReference type="KEGG" id="gga:378793"/>
<dbReference type="CTD" id="60487"/>
<dbReference type="VEuPathDB" id="HostDB:geneid_378793"/>
<dbReference type="eggNOG" id="KOG2671">
    <property type="taxonomic scope" value="Eukaryota"/>
</dbReference>
<dbReference type="InParanoid" id="Q6YJI5"/>
<dbReference type="OrthoDB" id="296065at2759"/>
<dbReference type="PhylomeDB" id="Q6YJI5"/>
<dbReference type="PRO" id="PR:Q6YJI5"/>
<dbReference type="Proteomes" id="UP000000539">
    <property type="component" value="Unassembled WGS sequence"/>
</dbReference>
<dbReference type="GO" id="GO:0005737">
    <property type="term" value="C:cytoplasm"/>
    <property type="evidence" value="ECO:0000250"/>
    <property type="project" value="UniProtKB"/>
</dbReference>
<dbReference type="GO" id="GO:0043528">
    <property type="term" value="C:tRNA (m2G10) methyltransferase complex"/>
    <property type="evidence" value="ECO:0000250"/>
    <property type="project" value="UniProtKB"/>
</dbReference>
<dbReference type="GO" id="GO:0008168">
    <property type="term" value="F:methyltransferase activity"/>
    <property type="evidence" value="ECO:0000318"/>
    <property type="project" value="GO_Central"/>
</dbReference>
<dbReference type="GO" id="GO:0160102">
    <property type="term" value="F:tRNA (guanine(10)-N2)-methyltransferase activity"/>
    <property type="evidence" value="ECO:0000250"/>
    <property type="project" value="UniProtKB"/>
</dbReference>
<dbReference type="GO" id="GO:0000049">
    <property type="term" value="F:tRNA binding"/>
    <property type="evidence" value="ECO:0007669"/>
    <property type="project" value="UniProtKB-KW"/>
</dbReference>
<dbReference type="GO" id="GO:0032259">
    <property type="term" value="P:methylation"/>
    <property type="evidence" value="ECO:0007669"/>
    <property type="project" value="UniProtKB-KW"/>
</dbReference>
<dbReference type="GO" id="GO:0008033">
    <property type="term" value="P:tRNA processing"/>
    <property type="evidence" value="ECO:0007669"/>
    <property type="project" value="UniProtKB-KW"/>
</dbReference>
<dbReference type="FunFam" id="3.40.50.150:FF:000069">
    <property type="entry name" value="tRNA (Guanine(10)-N2)-methyltransferase homolog isoform X2"/>
    <property type="match status" value="1"/>
</dbReference>
<dbReference type="Gene3D" id="3.40.50.150">
    <property type="entry name" value="Vaccinia Virus protein VP39"/>
    <property type="match status" value="1"/>
</dbReference>
<dbReference type="InterPro" id="IPR002052">
    <property type="entry name" value="DNA_methylase_N6_adenine_CS"/>
</dbReference>
<dbReference type="InterPro" id="IPR000241">
    <property type="entry name" value="RlmKL-like_Mtase"/>
</dbReference>
<dbReference type="InterPro" id="IPR029063">
    <property type="entry name" value="SAM-dependent_MTases_sf"/>
</dbReference>
<dbReference type="InterPro" id="IPR016691">
    <property type="entry name" value="tRNA_mtfrase_TRM11"/>
</dbReference>
<dbReference type="PANTHER" id="PTHR13370">
    <property type="entry name" value="RNA METHYLASE-RELATED"/>
    <property type="match status" value="1"/>
</dbReference>
<dbReference type="PANTHER" id="PTHR13370:SF3">
    <property type="entry name" value="TRNA (GUANINE(10)-N2)-METHYLTRANSFERASE HOMOLOG"/>
    <property type="match status" value="1"/>
</dbReference>
<dbReference type="Pfam" id="PF01170">
    <property type="entry name" value="UPF0020"/>
    <property type="match status" value="1"/>
</dbReference>
<dbReference type="PIRSF" id="PIRSF017259">
    <property type="entry name" value="tRNA_mtfrase_TRM11"/>
    <property type="match status" value="1"/>
</dbReference>
<dbReference type="PRINTS" id="PR00507">
    <property type="entry name" value="N12N6MTFRASE"/>
</dbReference>
<dbReference type="SUPFAM" id="SSF53335">
    <property type="entry name" value="S-adenosyl-L-methionine-dependent methyltransferases"/>
    <property type="match status" value="1"/>
</dbReference>
<dbReference type="PROSITE" id="PS00092">
    <property type="entry name" value="N6_MTASE"/>
    <property type="match status" value="1"/>
</dbReference>
<dbReference type="PROSITE" id="PS51627">
    <property type="entry name" value="SAM_MT_TRM11"/>
    <property type="match status" value="1"/>
</dbReference>
<keyword id="KW-0963">Cytoplasm</keyword>
<keyword id="KW-0489">Methyltransferase</keyword>
<keyword id="KW-1185">Reference proteome</keyword>
<keyword id="KW-0694">RNA-binding</keyword>
<keyword id="KW-0949">S-adenosyl-L-methionine</keyword>
<keyword id="KW-0808">Transferase</keyword>
<keyword id="KW-0819">tRNA processing</keyword>
<keyword id="KW-0820">tRNA-binding</keyword>
<proteinExistence type="evidence at transcript level"/>
<name>TRM11_CHICK</name>
<reference key="1">
    <citation type="submission" date="2002-08" db="EMBL/GenBank/DDBJ databases">
        <title>Molecular identification and conserved evolution of a novel RNA methylase protein gene in higher eukaryotic organisms.</title>
        <authorList>
            <person name="Chen Y."/>
            <person name="Huang C.-H."/>
        </authorList>
    </citation>
    <scope>NUCLEOTIDE SEQUENCE [MRNA]</scope>
</reference>
<protein>
    <recommendedName>
        <fullName evidence="1">tRNA (guanine(10)-N(2))-methyltransferase TRMT11</fullName>
        <ecNumber evidence="1">2.1.1.214</ecNumber>
    </recommendedName>
    <alternativeName>
        <fullName evidence="1">tRNA methyltransferase 11 homolog</fullName>
    </alternativeName>
</protein>
<comment type="function">
    <text evidence="1">Catalytic subunit of the TRMT11-TRM112 methyltransferase complex, that specifically mediates the S-adenosyl-L-methionine-dependent N(2)-methylation of guanosine nucleotide at position 10 (m2G10) in tRNAs. This is one of the major tRNA (guanine-N(2))-methyltransferases.</text>
</comment>
<comment type="catalytic activity">
    <reaction evidence="1">
        <text>guanosine(10) in tRNA + S-adenosyl-L-methionine = N(2)-methylguanosine(10) in tRNA + S-adenosyl-L-homocysteine + H(+)</text>
        <dbReference type="Rhea" id="RHEA:43128"/>
        <dbReference type="Rhea" id="RHEA-COMP:10355"/>
        <dbReference type="Rhea" id="RHEA-COMP:10357"/>
        <dbReference type="ChEBI" id="CHEBI:15378"/>
        <dbReference type="ChEBI" id="CHEBI:57856"/>
        <dbReference type="ChEBI" id="CHEBI:59789"/>
        <dbReference type="ChEBI" id="CHEBI:74269"/>
        <dbReference type="ChEBI" id="CHEBI:74481"/>
        <dbReference type="EC" id="2.1.1.214"/>
    </reaction>
    <physiologicalReaction direction="left-to-right" evidence="1">
        <dbReference type="Rhea" id="RHEA:43129"/>
    </physiologicalReaction>
</comment>
<comment type="subunit">
    <text evidence="1">Part of the heterodimeric TRMT11-TRM112 methyltransferase complex; this complex forms an active tRNA methyltransferase, where TRMT112 acts as an activator of the catalytic subunit TRMT11.</text>
</comment>
<comment type="subcellular location">
    <subcellularLocation>
        <location evidence="1">Cytoplasm</location>
    </subcellularLocation>
</comment>
<comment type="similarity">
    <text evidence="2">Belongs to the class I-like SAM-binding methyltransferase superfamily. TRM11 methyltransferase family.</text>
</comment>
<organism>
    <name type="scientific">Gallus gallus</name>
    <name type="common">Chicken</name>
    <dbReference type="NCBI Taxonomy" id="9031"/>
    <lineage>
        <taxon>Eukaryota</taxon>
        <taxon>Metazoa</taxon>
        <taxon>Chordata</taxon>
        <taxon>Craniata</taxon>
        <taxon>Vertebrata</taxon>
        <taxon>Euteleostomi</taxon>
        <taxon>Archelosauria</taxon>
        <taxon>Archosauria</taxon>
        <taxon>Dinosauria</taxon>
        <taxon>Saurischia</taxon>
        <taxon>Theropoda</taxon>
        <taxon>Coelurosauria</taxon>
        <taxon>Aves</taxon>
        <taxon>Neognathae</taxon>
        <taxon>Galloanserae</taxon>
        <taxon>Galliformes</taxon>
        <taxon>Phasianidae</taxon>
        <taxon>Phasianinae</taxon>
        <taxon>Gallus</taxon>
    </lineage>
</organism>
<evidence type="ECO:0000250" key="1">
    <source>
        <dbReference type="UniProtKB" id="Q7Z4G4"/>
    </source>
</evidence>
<evidence type="ECO:0000255" key="2">
    <source>
        <dbReference type="PROSITE-ProRule" id="PRU00959"/>
    </source>
</evidence>
<sequence>MAAAGLALQRYLLLLAQEHLEFRLPEITSLLSLCGGQFSSQQEVCVNSPFWILNIPSEEMARGLMRRTVCAKSIFELWGHGRSAGELYASLKNYPTDKMLPYLQPDSTYKIHIHTFNKTLTQAQKIKKIDALEFLPFSGKVNLKNPEHIFWILEDYGMDPNNVPEEPFDLYFGRWIADGQRELIESYSIKKRHFIGNTSMDACLSFIMANHGRVKPNDIVYDPFVGTGGLLISSAHFGAYVCGTGIDYNTIHGLGKASRKNQKWRGPDENIRANLRQYGLEKYYLDALVSDSSRPIWRKGTLFDAIITDPPYGIREATRRTGSQKESVKSSERSTENHIIISSSYHLSDIFFDLLKFAAEYLVMGGRLVYWLPIYRPEYTEEIVPRHPCLKLISNCEQMLSSHTSRRLITMEKVKEFKDQDQNSYLSDGQYMPYKGHNSFREKYFSGVTKRIAKEEKDNQK</sequence>
<gene>
    <name evidence="1" type="primary">TRMT11</name>
</gene>